<organism>
    <name type="scientific">Pseudomonas putida (strain ATCC 47054 / DSM 6125 / CFBP 8728 / NCIMB 11950 / KT2440)</name>
    <dbReference type="NCBI Taxonomy" id="160488"/>
    <lineage>
        <taxon>Bacteria</taxon>
        <taxon>Pseudomonadati</taxon>
        <taxon>Pseudomonadota</taxon>
        <taxon>Gammaproteobacteria</taxon>
        <taxon>Pseudomonadales</taxon>
        <taxon>Pseudomonadaceae</taxon>
        <taxon>Pseudomonas</taxon>
    </lineage>
</organism>
<sequence>MSSALPDVSVTDLAPSLSPLQWVGMQGIDLPVRIQEPTYQRELHARADVQVDLPAPHVKGIHMSRLYRLLDAWGQAAAVSPASLFALLQEMIDSHQDCESRSARVRLDFDLLVRRPALVTEGLSGWKSYPVHVLATKVGGALNLSIEVRIGYSSTCPCSAALSRQLIEDGFLRTFKDQPLLEVSAVAQWLRSNASLATPHSQRSEARVRVTVPADAPDLGLLALIDHVEGALRTPVQTAVKRADEQAFAALNGQNLMFVEDAARRIQASLHGYRDSQVHVRHLESLHPHDASAWSAPQAAAPDQQESFATGNER</sequence>
<accession>Q88HM9</accession>
<proteinExistence type="inferred from homology"/>
<gene>
    <name evidence="1" type="primary">folE2</name>
    <name type="ordered locus">PP_3324</name>
</gene>
<keyword id="KW-0378">Hydrolase</keyword>
<keyword id="KW-1185">Reference proteome</keyword>
<name>GCH4_PSEPK</name>
<feature type="chain" id="PRO_0000147720" description="GTP cyclohydrolase FolE2">
    <location>
        <begin position="1"/>
        <end position="314"/>
    </location>
</feature>
<feature type="region of interest" description="Disordered" evidence="2">
    <location>
        <begin position="290"/>
        <end position="314"/>
    </location>
</feature>
<feature type="compositionally biased region" description="Low complexity" evidence="2">
    <location>
        <begin position="291"/>
        <end position="304"/>
    </location>
</feature>
<feature type="compositionally biased region" description="Polar residues" evidence="2">
    <location>
        <begin position="305"/>
        <end position="314"/>
    </location>
</feature>
<feature type="site" description="May be catalytically important" evidence="1">
    <location>
        <position position="156"/>
    </location>
</feature>
<comment type="function">
    <text evidence="1">Converts GTP to 7,8-dihydroneopterin triphosphate.</text>
</comment>
<comment type="catalytic activity">
    <reaction evidence="1">
        <text>GTP + H2O = 7,8-dihydroneopterin 3'-triphosphate + formate + H(+)</text>
        <dbReference type="Rhea" id="RHEA:17473"/>
        <dbReference type="ChEBI" id="CHEBI:15377"/>
        <dbReference type="ChEBI" id="CHEBI:15378"/>
        <dbReference type="ChEBI" id="CHEBI:15740"/>
        <dbReference type="ChEBI" id="CHEBI:37565"/>
        <dbReference type="ChEBI" id="CHEBI:58462"/>
        <dbReference type="EC" id="3.5.4.16"/>
    </reaction>
</comment>
<comment type="pathway">
    <text evidence="1">Cofactor biosynthesis; 7,8-dihydroneopterin triphosphate biosynthesis; 7,8-dihydroneopterin triphosphate from GTP: step 1/1.</text>
</comment>
<comment type="similarity">
    <text evidence="1">Belongs to the GTP cyclohydrolase IV family.</text>
</comment>
<comment type="sequence caution" evidence="3">
    <conflict type="erroneous initiation">
        <sequence resource="EMBL-CDS" id="AAN68931"/>
    </conflict>
</comment>
<dbReference type="EC" id="3.5.4.16" evidence="1"/>
<dbReference type="EMBL" id="AE015451">
    <property type="protein sequence ID" value="AAN68931.1"/>
    <property type="status" value="ALT_INIT"/>
    <property type="molecule type" value="Genomic_DNA"/>
</dbReference>
<dbReference type="RefSeq" id="NP_745467.1">
    <property type="nucleotide sequence ID" value="NC_002947.4"/>
</dbReference>
<dbReference type="RefSeq" id="WP_049587854.1">
    <property type="nucleotide sequence ID" value="NZ_CP169744.1"/>
</dbReference>
<dbReference type="SMR" id="Q88HM9"/>
<dbReference type="STRING" id="160488.PP_3324"/>
<dbReference type="PaxDb" id="160488-PP_3324"/>
<dbReference type="GeneID" id="83679969"/>
<dbReference type="KEGG" id="ppu:PP_3324"/>
<dbReference type="PATRIC" id="fig|160488.4.peg.3534"/>
<dbReference type="eggNOG" id="COG1469">
    <property type="taxonomic scope" value="Bacteria"/>
</dbReference>
<dbReference type="HOGENOM" id="CLU_062816_0_0_6"/>
<dbReference type="OrthoDB" id="239637at2"/>
<dbReference type="PhylomeDB" id="Q88HM9"/>
<dbReference type="UniPathway" id="UPA00848">
    <property type="reaction ID" value="UER00151"/>
</dbReference>
<dbReference type="Proteomes" id="UP000000556">
    <property type="component" value="Chromosome"/>
</dbReference>
<dbReference type="GO" id="GO:0003934">
    <property type="term" value="F:GTP cyclohydrolase I activity"/>
    <property type="evidence" value="ECO:0007669"/>
    <property type="project" value="UniProtKB-UniRule"/>
</dbReference>
<dbReference type="GO" id="GO:0046654">
    <property type="term" value="P:tetrahydrofolate biosynthetic process"/>
    <property type="evidence" value="ECO:0007669"/>
    <property type="project" value="UniProtKB-UniRule"/>
</dbReference>
<dbReference type="Gene3D" id="3.10.270.10">
    <property type="entry name" value="Urate Oxidase"/>
    <property type="match status" value="1"/>
</dbReference>
<dbReference type="HAMAP" id="MF_01527_B">
    <property type="entry name" value="GTP_cyclohydrol_B"/>
    <property type="match status" value="1"/>
</dbReference>
<dbReference type="InterPro" id="IPR022838">
    <property type="entry name" value="GTP_cyclohydrolase_FolE2"/>
</dbReference>
<dbReference type="InterPro" id="IPR003801">
    <property type="entry name" value="GTP_cyclohydrolase_FolE2/MptA"/>
</dbReference>
<dbReference type="NCBIfam" id="NF010200">
    <property type="entry name" value="PRK13674.1-1"/>
    <property type="match status" value="1"/>
</dbReference>
<dbReference type="PANTHER" id="PTHR36445">
    <property type="entry name" value="GTP CYCLOHYDROLASE MPTA"/>
    <property type="match status" value="1"/>
</dbReference>
<dbReference type="PANTHER" id="PTHR36445:SF1">
    <property type="entry name" value="GTP CYCLOHYDROLASE MPTA"/>
    <property type="match status" value="1"/>
</dbReference>
<dbReference type="Pfam" id="PF02649">
    <property type="entry name" value="GCHY-1"/>
    <property type="match status" value="1"/>
</dbReference>
<evidence type="ECO:0000255" key="1">
    <source>
        <dbReference type="HAMAP-Rule" id="MF_01527"/>
    </source>
</evidence>
<evidence type="ECO:0000256" key="2">
    <source>
        <dbReference type="SAM" id="MobiDB-lite"/>
    </source>
</evidence>
<evidence type="ECO:0000305" key="3"/>
<reference key="1">
    <citation type="journal article" date="2002" name="Environ. Microbiol.">
        <title>Complete genome sequence and comparative analysis of the metabolically versatile Pseudomonas putida KT2440.</title>
        <authorList>
            <person name="Nelson K.E."/>
            <person name="Weinel C."/>
            <person name="Paulsen I.T."/>
            <person name="Dodson R.J."/>
            <person name="Hilbert H."/>
            <person name="Martins dos Santos V.A.P."/>
            <person name="Fouts D.E."/>
            <person name="Gill S.R."/>
            <person name="Pop M."/>
            <person name="Holmes M."/>
            <person name="Brinkac L.M."/>
            <person name="Beanan M.J."/>
            <person name="DeBoy R.T."/>
            <person name="Daugherty S.C."/>
            <person name="Kolonay J.F."/>
            <person name="Madupu R."/>
            <person name="Nelson W.C."/>
            <person name="White O."/>
            <person name="Peterson J.D."/>
            <person name="Khouri H.M."/>
            <person name="Hance I."/>
            <person name="Chris Lee P."/>
            <person name="Holtzapple E.K."/>
            <person name="Scanlan D."/>
            <person name="Tran K."/>
            <person name="Moazzez A."/>
            <person name="Utterback T.R."/>
            <person name="Rizzo M."/>
            <person name="Lee K."/>
            <person name="Kosack D."/>
            <person name="Moestl D."/>
            <person name="Wedler H."/>
            <person name="Lauber J."/>
            <person name="Stjepandic D."/>
            <person name="Hoheisel J."/>
            <person name="Straetz M."/>
            <person name="Heim S."/>
            <person name="Kiewitz C."/>
            <person name="Eisen J.A."/>
            <person name="Timmis K.N."/>
            <person name="Duesterhoeft A."/>
            <person name="Tuemmler B."/>
            <person name="Fraser C.M."/>
        </authorList>
    </citation>
    <scope>NUCLEOTIDE SEQUENCE [LARGE SCALE GENOMIC DNA]</scope>
    <source>
        <strain>ATCC 47054 / DSM 6125 / CFBP 8728 / NCIMB 11950 / KT2440</strain>
    </source>
</reference>
<protein>
    <recommendedName>
        <fullName evidence="1">GTP cyclohydrolase FolE2</fullName>
        <ecNumber evidence="1">3.5.4.16</ecNumber>
    </recommendedName>
</protein>